<sequence length="365" mass="38239">MIKFLSALILLLVTTAAQAERIRDLTSVQGVRQNSLIGYGLVVGLDGTGDQTTQTPFTTQTLNNMLSQLGITVPTGTNMQLKNVAAVMVTASLPPFGRQGQTIDVVVSSMGNAKSLRGGTLLMTPLKGVDSQVYALAQGNILVGGAGASAGGSSVQVNQLNGGRITNGAVIERELPSQFGVGNTLNLQLNDEDFSMAQQIADTINRVRGYGSATALDARTIQVRVPSGNSSQVRFLADIQNMQVNVTPQDAKVVINSRTGSVVMNREVTLDSCAVAQGNLSVTVNRQANVSQPDTPFGGGQTVVTPQTQIDLRQSGGSLQSVRSSARLNNVVRALNALGATPMDLMSILQSMQSAGCLRAKLEII</sequence>
<gene>
    <name evidence="1" type="primary">flgI</name>
    <name type="ordered locus">SBO_1984</name>
</gene>
<proteinExistence type="inferred from homology"/>
<comment type="function">
    <text evidence="1">Assembles around the rod to form the L-ring and probably protects the motor/basal body from shearing forces during rotation.</text>
</comment>
<comment type="subunit">
    <text evidence="1">The basal body constitutes a major portion of the flagellar organelle and consists of four rings (L,P,S, and M) mounted on a central rod.</text>
</comment>
<comment type="subcellular location">
    <subcellularLocation>
        <location evidence="1">Periplasm</location>
    </subcellularLocation>
    <subcellularLocation>
        <location evidence="1">Bacterial flagellum basal body</location>
    </subcellularLocation>
</comment>
<comment type="similarity">
    <text evidence="1">Belongs to the FlgI family.</text>
</comment>
<organism>
    <name type="scientific">Shigella boydii serotype 4 (strain Sb227)</name>
    <dbReference type="NCBI Taxonomy" id="300268"/>
    <lineage>
        <taxon>Bacteria</taxon>
        <taxon>Pseudomonadati</taxon>
        <taxon>Pseudomonadota</taxon>
        <taxon>Gammaproteobacteria</taxon>
        <taxon>Enterobacterales</taxon>
        <taxon>Enterobacteriaceae</taxon>
        <taxon>Shigella</taxon>
    </lineage>
</organism>
<name>FLGI_SHIBS</name>
<reference key="1">
    <citation type="journal article" date="2005" name="Nucleic Acids Res.">
        <title>Genome dynamics and diversity of Shigella species, the etiologic agents of bacillary dysentery.</title>
        <authorList>
            <person name="Yang F."/>
            <person name="Yang J."/>
            <person name="Zhang X."/>
            <person name="Chen L."/>
            <person name="Jiang Y."/>
            <person name="Yan Y."/>
            <person name="Tang X."/>
            <person name="Wang J."/>
            <person name="Xiong Z."/>
            <person name="Dong J."/>
            <person name="Xue Y."/>
            <person name="Zhu Y."/>
            <person name="Xu X."/>
            <person name="Sun L."/>
            <person name="Chen S."/>
            <person name="Nie H."/>
            <person name="Peng J."/>
            <person name="Xu J."/>
            <person name="Wang Y."/>
            <person name="Yuan Z."/>
            <person name="Wen Y."/>
            <person name="Yao Z."/>
            <person name="Shen Y."/>
            <person name="Qiang B."/>
            <person name="Hou Y."/>
            <person name="Yu J."/>
            <person name="Jin Q."/>
        </authorList>
    </citation>
    <scope>NUCLEOTIDE SEQUENCE [LARGE SCALE GENOMIC DNA]</scope>
    <source>
        <strain>Sb227</strain>
    </source>
</reference>
<accession>Q31ZD5</accession>
<feature type="signal peptide" evidence="1">
    <location>
        <begin position="1"/>
        <end position="19"/>
    </location>
</feature>
<feature type="chain" id="PRO_0000236318" description="Flagellar P-ring protein">
    <location>
        <begin position="20"/>
        <end position="365"/>
    </location>
</feature>
<evidence type="ECO:0000255" key="1">
    <source>
        <dbReference type="HAMAP-Rule" id="MF_00416"/>
    </source>
</evidence>
<dbReference type="EMBL" id="CP000036">
    <property type="protein sequence ID" value="ABB66573.1"/>
    <property type="molecule type" value="Genomic_DNA"/>
</dbReference>
<dbReference type="RefSeq" id="WP_000589324.1">
    <property type="nucleotide sequence ID" value="NC_007613.1"/>
</dbReference>
<dbReference type="SMR" id="Q31ZD5"/>
<dbReference type="KEGG" id="sbo:SBO_1984"/>
<dbReference type="HOGENOM" id="CLU_045235_1_0_6"/>
<dbReference type="Proteomes" id="UP000007067">
    <property type="component" value="Chromosome"/>
</dbReference>
<dbReference type="GO" id="GO:0009428">
    <property type="term" value="C:bacterial-type flagellum basal body, distal rod, P ring"/>
    <property type="evidence" value="ECO:0007669"/>
    <property type="project" value="InterPro"/>
</dbReference>
<dbReference type="GO" id="GO:0030288">
    <property type="term" value="C:outer membrane-bounded periplasmic space"/>
    <property type="evidence" value="ECO:0007669"/>
    <property type="project" value="InterPro"/>
</dbReference>
<dbReference type="GO" id="GO:0005198">
    <property type="term" value="F:structural molecule activity"/>
    <property type="evidence" value="ECO:0007669"/>
    <property type="project" value="InterPro"/>
</dbReference>
<dbReference type="GO" id="GO:0071973">
    <property type="term" value="P:bacterial-type flagellum-dependent cell motility"/>
    <property type="evidence" value="ECO:0007669"/>
    <property type="project" value="InterPro"/>
</dbReference>
<dbReference type="HAMAP" id="MF_00416">
    <property type="entry name" value="FlgI"/>
    <property type="match status" value="1"/>
</dbReference>
<dbReference type="InterPro" id="IPR001782">
    <property type="entry name" value="Flag_FlgI"/>
</dbReference>
<dbReference type="NCBIfam" id="NF003676">
    <property type="entry name" value="PRK05303.1"/>
    <property type="match status" value="1"/>
</dbReference>
<dbReference type="PANTHER" id="PTHR30381">
    <property type="entry name" value="FLAGELLAR P-RING PERIPLASMIC PROTEIN FLGI"/>
    <property type="match status" value="1"/>
</dbReference>
<dbReference type="PANTHER" id="PTHR30381:SF0">
    <property type="entry name" value="FLAGELLAR P-RING PROTEIN"/>
    <property type="match status" value="1"/>
</dbReference>
<dbReference type="Pfam" id="PF02119">
    <property type="entry name" value="FlgI"/>
    <property type="match status" value="1"/>
</dbReference>
<dbReference type="PRINTS" id="PR01010">
    <property type="entry name" value="FLGPRINGFLGI"/>
</dbReference>
<protein>
    <recommendedName>
        <fullName evidence="1">Flagellar P-ring protein</fullName>
    </recommendedName>
    <alternativeName>
        <fullName evidence="1">Basal body P-ring protein</fullName>
    </alternativeName>
</protein>
<keyword id="KW-0975">Bacterial flagellum</keyword>
<keyword id="KW-0574">Periplasm</keyword>
<keyword id="KW-0732">Signal</keyword>